<evidence type="ECO:0000255" key="1">
    <source>
        <dbReference type="HAMAP-Rule" id="MF_01382"/>
    </source>
</evidence>
<evidence type="ECO:0000256" key="2">
    <source>
        <dbReference type="SAM" id="MobiDB-lite"/>
    </source>
</evidence>
<name>SECA1_STAAC</name>
<reference key="1">
    <citation type="journal article" date="2005" name="J. Bacteriol.">
        <title>Insights on evolution of virulence and resistance from the complete genome analysis of an early methicillin-resistant Staphylococcus aureus strain and a biofilm-producing methicillin-resistant Staphylococcus epidermidis strain.</title>
        <authorList>
            <person name="Gill S.R."/>
            <person name="Fouts D.E."/>
            <person name="Archer G.L."/>
            <person name="Mongodin E.F."/>
            <person name="DeBoy R.T."/>
            <person name="Ravel J."/>
            <person name="Paulsen I.T."/>
            <person name="Kolonay J.F."/>
            <person name="Brinkac L.M."/>
            <person name="Beanan M.J."/>
            <person name="Dodson R.J."/>
            <person name="Daugherty S.C."/>
            <person name="Madupu R."/>
            <person name="Angiuoli S.V."/>
            <person name="Durkin A.S."/>
            <person name="Haft D.H."/>
            <person name="Vamathevan J.J."/>
            <person name="Khouri H."/>
            <person name="Utterback T.R."/>
            <person name="Lee C."/>
            <person name="Dimitrov G."/>
            <person name="Jiang L."/>
            <person name="Qin H."/>
            <person name="Weidman J."/>
            <person name="Tran K."/>
            <person name="Kang K.H."/>
            <person name="Hance I.R."/>
            <person name="Nelson K.E."/>
            <person name="Fraser C.M."/>
        </authorList>
    </citation>
    <scope>NUCLEOTIDE SEQUENCE [LARGE SCALE GENOMIC DNA]</scope>
    <source>
        <strain>COL</strain>
    </source>
</reference>
<sequence length="843" mass="95960">MGFLSKILDGNNKEIKQLGKLADKVIALEEKTAILTDEEIRNKTKQFQTELADIDNVKKQNDYLDKILPEAYALVREGSKRVFNMTPYKVQIMGGIAIHKGDIAEMRTGEGKTLTATMPTYLNALAGRGVHVITVNEYLSSVQSEEMAELYNFLGLTVGLNLNSKTTEEKREAYAQDITYSTNNELGFDYLRDNMVNYSEDRVMRPLHFAIIDEVDSILIDEARTPLIISGEAEKSTSLYTQANVFAKMLKQDEDYKYDEKTKAVHLTEQGADKAERMFKVENLYDVQNVDVISHINTALRAHVTLQRDVDYMVVDGEVLIVDQFTGRTMPGRRFSEGLHQAIEAKEGVQIQNESKTMASITFQNYFRMYNKLAGMTGTAKTEEEEFRNIYNMTVTQIPTNKPVQRNDKSDLIYISQKGKFDAVVEDVVEKHKAGQPVLLGTVAVETSEYISNLLKKRGIRHDVLNAKNHEREAEIVAGAGQKGAVTIATNMAGRGTDIKLGEGVEELGGLAVIGTERHESRRIDDQLRGRSGRQGDKGDSRFYLSLQDELMIRFGSERLQKMMSRLGLDDSTPIESKMVSRAVESAQKRVEGNNFDARKRILEYDEVLRKQREIIYNERNSIIDEEDSSQVVDAMLRSTLQRSINYYINTADDEPEYQPFIDYINDIFLQEGDITEDDIKGKDAEDIFEVVWAKIEAAYQSQKDILEEQMNEFERMILLRSIDSHWTDHIDTMDQLRQGIHLRSYAQQNPLRDYQNEGHELFDIMMQNIEEDTCKFILKSVVQVEDNIEREKTTEFGEAKHVSAEDGKEKVKPKPIVKGDQVGRNDDCPCGSGKKFKNCHGK</sequence>
<feature type="chain" id="PRO_0000109602" description="Protein translocase subunit SecA 1">
    <location>
        <begin position="1"/>
        <end position="843"/>
    </location>
</feature>
<feature type="region of interest" description="Disordered" evidence="2">
    <location>
        <begin position="799"/>
        <end position="826"/>
    </location>
</feature>
<feature type="compositionally biased region" description="Basic and acidic residues" evidence="2">
    <location>
        <begin position="799"/>
        <end position="813"/>
    </location>
</feature>
<feature type="binding site" evidence="1">
    <location>
        <position position="91"/>
    </location>
    <ligand>
        <name>ATP</name>
        <dbReference type="ChEBI" id="CHEBI:30616"/>
    </ligand>
</feature>
<feature type="binding site" evidence="1">
    <location>
        <begin position="109"/>
        <end position="113"/>
    </location>
    <ligand>
        <name>ATP</name>
        <dbReference type="ChEBI" id="CHEBI:30616"/>
    </ligand>
</feature>
<feature type="binding site" evidence="1">
    <location>
        <position position="498"/>
    </location>
    <ligand>
        <name>ATP</name>
        <dbReference type="ChEBI" id="CHEBI:30616"/>
    </ligand>
</feature>
<feature type="binding site" evidence="1">
    <location>
        <position position="829"/>
    </location>
    <ligand>
        <name>Zn(2+)</name>
        <dbReference type="ChEBI" id="CHEBI:29105"/>
    </ligand>
</feature>
<feature type="binding site" evidence="1">
    <location>
        <position position="831"/>
    </location>
    <ligand>
        <name>Zn(2+)</name>
        <dbReference type="ChEBI" id="CHEBI:29105"/>
    </ligand>
</feature>
<feature type="binding site" evidence="1">
    <location>
        <position position="840"/>
    </location>
    <ligand>
        <name>Zn(2+)</name>
        <dbReference type="ChEBI" id="CHEBI:29105"/>
    </ligand>
</feature>
<feature type="binding site" evidence="1">
    <location>
        <position position="841"/>
    </location>
    <ligand>
        <name>Zn(2+)</name>
        <dbReference type="ChEBI" id="CHEBI:29105"/>
    </ligand>
</feature>
<organism>
    <name type="scientific">Staphylococcus aureus (strain COL)</name>
    <dbReference type="NCBI Taxonomy" id="93062"/>
    <lineage>
        <taxon>Bacteria</taxon>
        <taxon>Bacillati</taxon>
        <taxon>Bacillota</taxon>
        <taxon>Bacilli</taxon>
        <taxon>Bacillales</taxon>
        <taxon>Staphylococcaceae</taxon>
        <taxon>Staphylococcus</taxon>
    </lineage>
</organism>
<accession>Q5HHR7</accession>
<protein>
    <recommendedName>
        <fullName evidence="1">Protein translocase subunit SecA 1</fullName>
        <ecNumber evidence="1">7.4.2.8</ecNumber>
    </recommendedName>
</protein>
<dbReference type="EC" id="7.4.2.8" evidence="1"/>
<dbReference type="EMBL" id="CP000046">
    <property type="protein sequence ID" value="AAW36372.1"/>
    <property type="molecule type" value="Genomic_DNA"/>
</dbReference>
<dbReference type="SMR" id="Q5HHR7"/>
<dbReference type="KEGG" id="sac:SACOL0816"/>
<dbReference type="HOGENOM" id="CLU_005314_3_0_9"/>
<dbReference type="Proteomes" id="UP000000530">
    <property type="component" value="Chromosome"/>
</dbReference>
<dbReference type="GO" id="GO:0031522">
    <property type="term" value="C:cell envelope Sec protein transport complex"/>
    <property type="evidence" value="ECO:0007669"/>
    <property type="project" value="TreeGrafter"/>
</dbReference>
<dbReference type="GO" id="GO:0005829">
    <property type="term" value="C:cytosol"/>
    <property type="evidence" value="ECO:0007669"/>
    <property type="project" value="TreeGrafter"/>
</dbReference>
<dbReference type="GO" id="GO:0005886">
    <property type="term" value="C:plasma membrane"/>
    <property type="evidence" value="ECO:0007669"/>
    <property type="project" value="UniProtKB-SubCell"/>
</dbReference>
<dbReference type="GO" id="GO:0005524">
    <property type="term" value="F:ATP binding"/>
    <property type="evidence" value="ECO:0007669"/>
    <property type="project" value="UniProtKB-UniRule"/>
</dbReference>
<dbReference type="GO" id="GO:0046872">
    <property type="term" value="F:metal ion binding"/>
    <property type="evidence" value="ECO:0007669"/>
    <property type="project" value="UniProtKB-KW"/>
</dbReference>
<dbReference type="GO" id="GO:0008564">
    <property type="term" value="F:protein-exporting ATPase activity"/>
    <property type="evidence" value="ECO:0007669"/>
    <property type="project" value="UniProtKB-EC"/>
</dbReference>
<dbReference type="GO" id="GO:0065002">
    <property type="term" value="P:intracellular protein transmembrane transport"/>
    <property type="evidence" value="ECO:0007669"/>
    <property type="project" value="UniProtKB-UniRule"/>
</dbReference>
<dbReference type="GO" id="GO:0017038">
    <property type="term" value="P:protein import"/>
    <property type="evidence" value="ECO:0007669"/>
    <property type="project" value="InterPro"/>
</dbReference>
<dbReference type="GO" id="GO:0006605">
    <property type="term" value="P:protein targeting"/>
    <property type="evidence" value="ECO:0007669"/>
    <property type="project" value="UniProtKB-UniRule"/>
</dbReference>
<dbReference type="GO" id="GO:0043952">
    <property type="term" value="P:protein transport by the Sec complex"/>
    <property type="evidence" value="ECO:0007669"/>
    <property type="project" value="TreeGrafter"/>
</dbReference>
<dbReference type="CDD" id="cd17928">
    <property type="entry name" value="DEXDc_SecA"/>
    <property type="match status" value="1"/>
</dbReference>
<dbReference type="CDD" id="cd18803">
    <property type="entry name" value="SF2_C_secA"/>
    <property type="match status" value="1"/>
</dbReference>
<dbReference type="FunFam" id="3.40.50.300:FF:000694">
    <property type="entry name" value="Preprotein translocase subunit SecA"/>
    <property type="match status" value="1"/>
</dbReference>
<dbReference type="FunFam" id="3.90.1440.10:FF:000002">
    <property type="entry name" value="Protein translocase subunit SecA"/>
    <property type="match status" value="1"/>
</dbReference>
<dbReference type="Gene3D" id="1.10.3060.10">
    <property type="entry name" value="Helical scaffold and wing domains of SecA"/>
    <property type="match status" value="1"/>
</dbReference>
<dbReference type="Gene3D" id="3.40.50.300">
    <property type="entry name" value="P-loop containing nucleotide triphosphate hydrolases"/>
    <property type="match status" value="2"/>
</dbReference>
<dbReference type="Gene3D" id="3.90.1440.10">
    <property type="entry name" value="SecA, preprotein cross-linking domain"/>
    <property type="match status" value="1"/>
</dbReference>
<dbReference type="HAMAP" id="MF_01382">
    <property type="entry name" value="SecA"/>
    <property type="match status" value="1"/>
</dbReference>
<dbReference type="InterPro" id="IPR014001">
    <property type="entry name" value="Helicase_ATP-bd"/>
</dbReference>
<dbReference type="InterPro" id="IPR001650">
    <property type="entry name" value="Helicase_C-like"/>
</dbReference>
<dbReference type="InterPro" id="IPR027417">
    <property type="entry name" value="P-loop_NTPase"/>
</dbReference>
<dbReference type="InterPro" id="IPR004027">
    <property type="entry name" value="SEC_C_motif"/>
</dbReference>
<dbReference type="InterPro" id="IPR000185">
    <property type="entry name" value="SecA"/>
</dbReference>
<dbReference type="InterPro" id="IPR020937">
    <property type="entry name" value="SecA_CS"/>
</dbReference>
<dbReference type="InterPro" id="IPR011115">
    <property type="entry name" value="SecA_DEAD"/>
</dbReference>
<dbReference type="InterPro" id="IPR014018">
    <property type="entry name" value="SecA_motor_DEAD"/>
</dbReference>
<dbReference type="InterPro" id="IPR011130">
    <property type="entry name" value="SecA_preprotein_X-link_dom"/>
</dbReference>
<dbReference type="InterPro" id="IPR044722">
    <property type="entry name" value="SecA_SF2_C"/>
</dbReference>
<dbReference type="InterPro" id="IPR011116">
    <property type="entry name" value="SecA_Wing/Scaffold"/>
</dbReference>
<dbReference type="InterPro" id="IPR036266">
    <property type="entry name" value="SecA_Wing/Scaffold_sf"/>
</dbReference>
<dbReference type="InterPro" id="IPR036670">
    <property type="entry name" value="SecA_X-link_sf"/>
</dbReference>
<dbReference type="NCBIfam" id="NF006630">
    <property type="entry name" value="PRK09200.1"/>
    <property type="match status" value="1"/>
</dbReference>
<dbReference type="NCBIfam" id="TIGR00963">
    <property type="entry name" value="secA"/>
    <property type="match status" value="1"/>
</dbReference>
<dbReference type="PANTHER" id="PTHR30612:SF0">
    <property type="entry name" value="CHLOROPLAST PROTEIN-TRANSPORTING ATPASE"/>
    <property type="match status" value="1"/>
</dbReference>
<dbReference type="PANTHER" id="PTHR30612">
    <property type="entry name" value="SECA INNER MEMBRANE COMPONENT OF SEC PROTEIN SECRETION SYSTEM"/>
    <property type="match status" value="1"/>
</dbReference>
<dbReference type="Pfam" id="PF21090">
    <property type="entry name" value="P-loop_SecA"/>
    <property type="match status" value="1"/>
</dbReference>
<dbReference type="Pfam" id="PF02810">
    <property type="entry name" value="SEC-C"/>
    <property type="match status" value="1"/>
</dbReference>
<dbReference type="Pfam" id="PF07517">
    <property type="entry name" value="SecA_DEAD"/>
    <property type="match status" value="1"/>
</dbReference>
<dbReference type="Pfam" id="PF01043">
    <property type="entry name" value="SecA_PP_bind"/>
    <property type="match status" value="1"/>
</dbReference>
<dbReference type="Pfam" id="PF07516">
    <property type="entry name" value="SecA_SW"/>
    <property type="match status" value="1"/>
</dbReference>
<dbReference type="PRINTS" id="PR00906">
    <property type="entry name" value="SECA"/>
</dbReference>
<dbReference type="SMART" id="SM00957">
    <property type="entry name" value="SecA_DEAD"/>
    <property type="match status" value="1"/>
</dbReference>
<dbReference type="SMART" id="SM00958">
    <property type="entry name" value="SecA_PP_bind"/>
    <property type="match status" value="1"/>
</dbReference>
<dbReference type="SUPFAM" id="SSF81886">
    <property type="entry name" value="Helical scaffold and wing domains of SecA"/>
    <property type="match status" value="1"/>
</dbReference>
<dbReference type="SUPFAM" id="SSF52540">
    <property type="entry name" value="P-loop containing nucleoside triphosphate hydrolases"/>
    <property type="match status" value="2"/>
</dbReference>
<dbReference type="SUPFAM" id="SSF81767">
    <property type="entry name" value="Pre-protein crosslinking domain of SecA"/>
    <property type="match status" value="1"/>
</dbReference>
<dbReference type="PROSITE" id="PS01312">
    <property type="entry name" value="SECA"/>
    <property type="match status" value="1"/>
</dbReference>
<dbReference type="PROSITE" id="PS51196">
    <property type="entry name" value="SECA_MOTOR_DEAD"/>
    <property type="match status" value="1"/>
</dbReference>
<comment type="function">
    <text evidence="1">Part of the Sec protein translocase complex. Interacts with the SecYEG preprotein conducting channel. Has a central role in coupling the hydrolysis of ATP to the transfer of proteins into and across the cell membrane, serving as an ATP-driven molecular motor driving the stepwise translocation of polypeptide chains across the membrane.</text>
</comment>
<comment type="catalytic activity">
    <reaction evidence="1">
        <text>ATP + H2O + cellular proteinSide 1 = ADP + phosphate + cellular proteinSide 2.</text>
        <dbReference type="EC" id="7.4.2.8"/>
    </reaction>
</comment>
<comment type="cofactor">
    <cofactor evidence="1">
        <name>Zn(2+)</name>
        <dbReference type="ChEBI" id="CHEBI:29105"/>
    </cofactor>
    <text evidence="1">May bind 1 zinc ion per subunit.</text>
</comment>
<comment type="subunit">
    <text evidence="1">Monomer and homodimer. Part of the essential Sec protein translocation apparatus which comprises SecA, SecYEG and auxiliary proteins SecDF. Other proteins may also be involved.</text>
</comment>
<comment type="subcellular location">
    <subcellularLocation>
        <location evidence="1">Cell membrane</location>
        <topology evidence="1">Peripheral membrane protein</topology>
        <orientation evidence="1">Cytoplasmic side</orientation>
    </subcellularLocation>
    <subcellularLocation>
        <location evidence="1">Cytoplasm</location>
    </subcellularLocation>
    <text evidence="1">Distribution is 50-50.</text>
</comment>
<comment type="similarity">
    <text evidence="1">Belongs to the SecA family.</text>
</comment>
<gene>
    <name evidence="1" type="primary">secA1</name>
    <name type="ordered locus">SACOL0816</name>
</gene>
<proteinExistence type="inferred from homology"/>
<keyword id="KW-0067">ATP-binding</keyword>
<keyword id="KW-1003">Cell membrane</keyword>
<keyword id="KW-0963">Cytoplasm</keyword>
<keyword id="KW-0472">Membrane</keyword>
<keyword id="KW-0479">Metal-binding</keyword>
<keyword id="KW-0547">Nucleotide-binding</keyword>
<keyword id="KW-0653">Protein transport</keyword>
<keyword id="KW-1278">Translocase</keyword>
<keyword id="KW-0811">Translocation</keyword>
<keyword id="KW-0813">Transport</keyword>
<keyword id="KW-0862">Zinc</keyword>